<proteinExistence type="inferred from homology"/>
<name>MBTG_MYCPA</name>
<feature type="signal peptide" evidence="2">
    <location>
        <begin position="1"/>
        <end position="20"/>
    </location>
</feature>
<feature type="chain" id="PRO_0000261310" description="L-lysine N6-monooxygenase MbtG">
    <location>
        <begin position="21"/>
        <end position="428"/>
    </location>
</feature>
<protein>
    <recommendedName>
        <fullName>L-lysine N6-monooxygenase MbtG</fullName>
        <ecNumber>1.14.13.59</ecNumber>
    </recommendedName>
    <alternativeName>
        <fullName>Lysine 6-N-hydroxylase</fullName>
    </alternativeName>
    <alternativeName>
        <fullName>Lysine N6-hydroxylase</fullName>
    </alternativeName>
    <alternativeName>
        <fullName>Lysine-N-oxygenase</fullName>
    </alternativeName>
    <alternativeName>
        <fullName>Mycobactin synthase protein G</fullName>
    </alternativeName>
</protein>
<organism>
    <name type="scientific">Mycolicibacterium paratuberculosis (strain ATCC BAA-968 / K-10)</name>
    <name type="common">Mycobacterium paratuberculosis</name>
    <dbReference type="NCBI Taxonomy" id="262316"/>
    <lineage>
        <taxon>Bacteria</taxon>
        <taxon>Bacillati</taxon>
        <taxon>Actinomycetota</taxon>
        <taxon>Actinomycetes</taxon>
        <taxon>Mycobacteriales</taxon>
        <taxon>Mycobacteriaceae</taxon>
        <taxon>Mycobacterium</taxon>
        <taxon>Mycobacterium avium complex (MAC)</taxon>
    </lineage>
</organism>
<evidence type="ECO:0000250" key="1"/>
<evidence type="ECO:0000255" key="2"/>
<evidence type="ECO:0000305" key="3"/>
<accession>Q73XY8</accession>
<gene>
    <name type="primary">mbtG</name>
    <name type="ordered locus">MAP_2170c</name>
</gene>
<comment type="function">
    <text evidence="1">Flavoprotein monooxygenase required for N-hydroxylation of the two acylated lysine residues during mycobactin assembly, thus producing the hydroxamate groups necessary for iron sequestration. Is also able, but less efficiently, to hydroxylate L-lysine (non acylated) in vitro (By similarity).</text>
</comment>
<comment type="catalytic activity">
    <reaction>
        <text>L-lysine + NADPH + O2 = N(6)-hydroxy-L-lysine + NADP(+) + H2O</text>
        <dbReference type="Rhea" id="RHEA:23228"/>
        <dbReference type="ChEBI" id="CHEBI:15377"/>
        <dbReference type="ChEBI" id="CHEBI:15379"/>
        <dbReference type="ChEBI" id="CHEBI:32551"/>
        <dbReference type="ChEBI" id="CHEBI:57783"/>
        <dbReference type="ChEBI" id="CHEBI:57820"/>
        <dbReference type="ChEBI" id="CHEBI:58349"/>
        <dbReference type="EC" id="1.14.13.59"/>
    </reaction>
</comment>
<comment type="cofactor">
    <cofactor evidence="1">
        <name>FAD</name>
        <dbReference type="ChEBI" id="CHEBI:57692"/>
    </cofactor>
</comment>
<comment type="pathway">
    <text>Siderophore biosynthesis; mycobactin biosynthesis.</text>
</comment>
<comment type="similarity">
    <text evidence="3">Belongs to the lysine N(6)-hydroxylase/L-ornithine N(5)-oxygenase family.</text>
</comment>
<dbReference type="EC" id="1.14.13.59"/>
<dbReference type="EMBL" id="AE016958">
    <property type="protein sequence ID" value="AAS04487.1"/>
    <property type="molecule type" value="Genomic_DNA"/>
</dbReference>
<dbReference type="RefSeq" id="WP_003878341.1">
    <property type="nucleotide sequence ID" value="NZ_CP106873.1"/>
</dbReference>
<dbReference type="SMR" id="Q73XY8"/>
<dbReference type="STRING" id="262316.MAP_2170c"/>
<dbReference type="KEGG" id="mpa:MAP_2170c"/>
<dbReference type="PATRIC" id="fig|262316.17.peg.2307"/>
<dbReference type="eggNOG" id="COG3486">
    <property type="taxonomic scope" value="Bacteria"/>
</dbReference>
<dbReference type="HOGENOM" id="CLU_052650_0_0_11"/>
<dbReference type="UniPathway" id="UPA00011"/>
<dbReference type="Proteomes" id="UP000000580">
    <property type="component" value="Chromosome"/>
</dbReference>
<dbReference type="GO" id="GO:0047091">
    <property type="term" value="F:L-lysine 6-monooxygenase (NADPH) activity"/>
    <property type="evidence" value="ECO:0007669"/>
    <property type="project" value="UniProtKB-EC"/>
</dbReference>
<dbReference type="GO" id="GO:0009058">
    <property type="term" value="P:biosynthetic process"/>
    <property type="evidence" value="ECO:0007669"/>
    <property type="project" value="UniProtKB-ARBA"/>
</dbReference>
<dbReference type="GO" id="GO:0006879">
    <property type="term" value="P:intracellular iron ion homeostasis"/>
    <property type="evidence" value="ECO:0007669"/>
    <property type="project" value="TreeGrafter"/>
</dbReference>
<dbReference type="Gene3D" id="3.50.50.60">
    <property type="entry name" value="FAD/NAD(P)-binding domain"/>
    <property type="match status" value="1"/>
</dbReference>
<dbReference type="InterPro" id="IPR036188">
    <property type="entry name" value="FAD/NAD-bd_sf"/>
</dbReference>
<dbReference type="InterPro" id="IPR025700">
    <property type="entry name" value="Lys/Orn_oxygenase"/>
</dbReference>
<dbReference type="PANTHER" id="PTHR42802:SF1">
    <property type="entry name" value="L-ORNITHINE N(5)-MONOOXYGENASE"/>
    <property type="match status" value="1"/>
</dbReference>
<dbReference type="PANTHER" id="PTHR42802">
    <property type="entry name" value="MONOOXYGENASE"/>
    <property type="match status" value="1"/>
</dbReference>
<dbReference type="Pfam" id="PF13434">
    <property type="entry name" value="Lys_Orn_oxgnase"/>
    <property type="match status" value="1"/>
</dbReference>
<dbReference type="SUPFAM" id="SSF51905">
    <property type="entry name" value="FAD/NAD(P)-binding domain"/>
    <property type="match status" value="2"/>
</dbReference>
<keyword id="KW-0274">FAD</keyword>
<keyword id="KW-0285">Flavoprotein</keyword>
<keyword id="KW-0503">Monooxygenase</keyword>
<keyword id="KW-0521">NADP</keyword>
<keyword id="KW-0560">Oxidoreductase</keyword>
<keyword id="KW-1185">Reference proteome</keyword>
<keyword id="KW-0732">Signal</keyword>
<sequence>MSTLAILGAGAKAVAVAAKASVLRDMGVEVPDVVAVERIGVAANWQASGGWTDGAHRLGTSPEKDVGFPYRSALVPRRNAELDERMTRYSWQSYLIATASFAEWIDRGRPAPTHRRWSQYLSWVADHVGMTVVHGEVEQLAVTGDRWALHTHETTVHADALMITGPGQAEKSLLPGNPRMLSIAQFWDRAANHDRISAERVAVIGGGETAAAMLNELFRHRVSSITVISPQATLFTRGEGYFENSLFSDPTNWPALTLAERRDALARTDRGVFSSSVQEALLADDRIHHLRGRVTHAVGVQGQIRLTLSTNRGSENLETVHGFDLVIDGSGADSLWFAPLFSQEALDLLELGLGGPLSSERLQEAIGYDLAVTDVTPKLFLPNLSGLTQGPGFPNLSCLGLLSDRVLGSTLGPTNYPARRRHDERQPL</sequence>
<reference key="1">
    <citation type="journal article" date="2005" name="Proc. Natl. Acad. Sci. U.S.A.">
        <title>The complete genome sequence of Mycobacterium avium subspecies paratuberculosis.</title>
        <authorList>
            <person name="Li L."/>
            <person name="Bannantine J.P."/>
            <person name="Zhang Q."/>
            <person name="Amonsin A."/>
            <person name="May B.J."/>
            <person name="Alt D."/>
            <person name="Banerji N."/>
            <person name="Kanjilal S."/>
            <person name="Kapur V."/>
        </authorList>
    </citation>
    <scope>NUCLEOTIDE SEQUENCE [LARGE SCALE GENOMIC DNA]</scope>
    <source>
        <strain>ATCC BAA-968 / K-10</strain>
    </source>
</reference>